<accession>Q00650</accession>
<accession>Q39338</accession>
<accession>Q39352</accession>
<evidence type="ECO:0000250" key="1"/>
<evidence type="ECO:0000255" key="2"/>
<evidence type="ECO:0000256" key="3">
    <source>
        <dbReference type="SAM" id="MobiDB-lite"/>
    </source>
</evidence>
<evidence type="ECO:0000269" key="4">
    <source>
    </source>
</evidence>
<evidence type="ECO:0000269" key="5">
    <source>
    </source>
</evidence>
<evidence type="ECO:0000305" key="6"/>
<comment type="function">
    <text evidence="5">Many of the major pollen coat proteins are derived from endoproteolytic cleavage of oleosin-like proteins.</text>
</comment>
<comment type="subcellular location">
    <subcellularLocation>
        <location evidence="1">Lipid droplet</location>
    </subcellularLocation>
    <subcellularLocation>
        <location evidence="1">Membrane</location>
        <topology evidence="1">Multi-pass membrane protein</topology>
    </subcellularLocation>
    <text evidence="1">Surface of oil bodies. Oleosins exist at a monolayer lipid/water interface (By similarity).</text>
</comment>
<comment type="tissue specificity">
    <text evidence="4">The full-length protein is found in the tapetal lipid bodies of immature anthers, the proteolytically cleaved C-terminal product is found on the coats of pollen grains. Highest expression is in microspores entering and undergoing mitosis. No expression is observed in male-sterile plants, green tissues or roots.</text>
</comment>
<comment type="developmental stage">
    <text evidence="4">Expressed after tetrad release, until the end of the second pollen mitosis. Expressed in buds over 3 mm in length, maximum expression is observed in 3-4 mm buds and decreases rapidly in buds containing mature pollen.</text>
</comment>
<comment type="similarity">
    <text evidence="6">Belongs to the oleosin family.</text>
</comment>
<comment type="sequence caution" evidence="6">
    <conflict type="frameshift">
        <sequence resource="EMBL-CDS" id="CAA40608"/>
    </conflict>
</comment>
<organism>
    <name type="scientific">Brassica napus</name>
    <name type="common">Rape</name>
    <dbReference type="NCBI Taxonomy" id="3708"/>
    <lineage>
        <taxon>Eukaryota</taxon>
        <taxon>Viridiplantae</taxon>
        <taxon>Streptophyta</taxon>
        <taxon>Embryophyta</taxon>
        <taxon>Tracheophyta</taxon>
        <taxon>Spermatophyta</taxon>
        <taxon>Magnoliopsida</taxon>
        <taxon>eudicotyledons</taxon>
        <taxon>Gunneridae</taxon>
        <taxon>Pentapetalae</taxon>
        <taxon>rosids</taxon>
        <taxon>malvids</taxon>
        <taxon>Brassicales</taxon>
        <taxon>Brassicaceae</taxon>
        <taxon>Brassiceae</taxon>
        <taxon>Brassica</taxon>
    </lineage>
</organism>
<name>OLNB1_BRANA</name>
<gene>
    <name type="primary">OlnB1</name>
    <name type="synonym">I3</name>
    <name type="synonym">OlnB5</name>
    <name type="synonym">pol3</name>
</gene>
<sequence>MGILRKKKHERNASFKSVLTSILATQAATFLLLISGVSLAGTAAAFIATMPLFVVFSPILVPAGITTGLLTTGLAAAGGAGATAVTIILWLYKRATGKEPPAVLSKVLKKIIPGAAAAPRAAPAAAPAAAPAAAPAAAPAPKPAAAPAPKPAAPPAL</sequence>
<feature type="initiator methionine" description="Removed" evidence="5">
    <location>
        <position position="1"/>
    </location>
</feature>
<feature type="chain" id="PRO_0000084122" description="Oleosin-B1">
    <location>
        <begin position="2"/>
        <end position="157"/>
    </location>
</feature>
<feature type="chain" id="PRO_0000284880" description="Pollen coat protein B1">
    <location>
        <begin position="76"/>
        <end position="157"/>
    </location>
</feature>
<feature type="transmembrane region" description="Helical" evidence="2">
    <location>
        <begin position="22"/>
        <end position="42"/>
    </location>
</feature>
<feature type="transmembrane region" description="Helical" evidence="2">
    <location>
        <begin position="45"/>
        <end position="65"/>
    </location>
</feature>
<feature type="transmembrane region" description="Helical" evidence="2">
    <location>
        <begin position="72"/>
        <end position="92"/>
    </location>
</feature>
<feature type="repeat" description="1">
    <location>
        <begin position="119"/>
        <end position="122"/>
    </location>
</feature>
<feature type="repeat" description="2">
    <location>
        <begin position="123"/>
        <end position="126"/>
    </location>
</feature>
<feature type="repeat" description="3">
    <location>
        <begin position="127"/>
        <end position="130"/>
    </location>
</feature>
<feature type="repeat" description="4">
    <location>
        <begin position="131"/>
        <end position="134"/>
    </location>
</feature>
<feature type="repeat" description="5">
    <location>
        <begin position="135"/>
        <end position="138"/>
    </location>
</feature>
<feature type="repeat" description="6">
    <location>
        <begin position="139"/>
        <end position="142"/>
    </location>
</feature>
<feature type="repeat" description="7">
    <location>
        <begin position="143"/>
        <end position="146"/>
    </location>
</feature>
<feature type="repeat" description="8">
    <location>
        <begin position="147"/>
        <end position="150"/>
    </location>
</feature>
<feature type="repeat" description="9">
    <location>
        <begin position="151"/>
        <end position="154"/>
    </location>
</feature>
<feature type="region of interest" description="Polar">
    <location>
        <begin position="2"/>
        <end position="20"/>
    </location>
</feature>
<feature type="region of interest" description="Hydrophobic">
    <location>
        <begin position="21"/>
        <end position="138"/>
    </location>
</feature>
<feature type="region of interest" description="9 X 4 AA tandem repeats of P-[AR]-[AP]-[AKP]">
    <location>
        <begin position="119"/>
        <end position="122"/>
    </location>
</feature>
<feature type="region of interest" description="Disordered" evidence="3">
    <location>
        <begin position="137"/>
        <end position="157"/>
    </location>
</feature>
<feature type="compositionally biased region" description="Pro residues" evidence="3">
    <location>
        <begin position="138"/>
        <end position="157"/>
    </location>
</feature>
<feature type="sequence conflict" description="In Ref. 2; CAA57545." evidence="6" ref="2">
    <original>NA</original>
    <variation>KP</variation>
    <location>
        <begin position="12"/>
        <end position="13"/>
    </location>
</feature>
<feature type="sequence conflict" description="In Ref. 2; CAA57545." evidence="6" ref="2">
    <original>S</original>
    <variation>A</variation>
    <location>
        <position position="21"/>
    </location>
</feature>
<feature type="sequence conflict" description="In Ref. 2; CAA57545." evidence="6" ref="2">
    <original>Q</original>
    <variation>H</variation>
    <location>
        <position position="26"/>
    </location>
</feature>
<feature type="sequence conflict" description="In Ref. 2; CAA57545." evidence="6" ref="2">
    <original>S</original>
    <variation>A</variation>
    <location>
        <position position="35"/>
    </location>
</feature>
<feature type="sequence conflict" description="In Ref. 1; CAA40608 and 2; CAA57544." evidence="6" ref="1 2">
    <original>R</original>
    <variation>Q</variation>
    <location>
        <position position="94"/>
    </location>
</feature>
<feature type="sequence conflict" description="In Ref. 2; CAA57545." evidence="6" ref="2">
    <original>E</original>
    <variation>A</variation>
    <location>
        <position position="99"/>
    </location>
</feature>
<feature type="sequence conflict" description="In Ref. 2; CAA57545." evidence="6" ref="2">
    <original>A</original>
    <variation>K</variation>
    <location>
        <position position="102"/>
    </location>
</feature>
<feature type="sequence conflict" description="In Ref. 2; CAA57545." evidence="6" ref="2">
    <original>S</original>
    <variation>E</variation>
    <location>
        <position position="105"/>
    </location>
</feature>
<feature type="sequence conflict" description="In Ref. 2; CAA57545." evidence="6" ref="2">
    <original>R</original>
    <variation>A</variation>
    <location>
        <position position="120"/>
    </location>
</feature>
<feature type="sequence conflict" description="In Ref. 2; CAA57545." evidence="6" ref="2">
    <original>A</original>
    <variation>G</variation>
    <location>
        <position position="124"/>
    </location>
</feature>
<feature type="sequence conflict" description="In Ref. 2; CAA57545." evidence="6" ref="2">
    <original>A</original>
    <variation>V</variation>
    <location>
        <position position="137"/>
    </location>
</feature>
<feature type="sequence conflict" description="In Ref. 2; CAA57545." evidence="6" ref="2">
    <original>PK</original>
    <variation>AA</variation>
    <location>
        <begin position="141"/>
        <end position="142"/>
    </location>
</feature>
<feature type="sequence conflict" description="In Ref. 2; CAA57545." evidence="6" ref="2">
    <original>L</original>
    <variation>PKPAAAPSI</variation>
    <location>
        <position position="157"/>
    </location>
</feature>
<keyword id="KW-0903">Direct protein sequencing</keyword>
<keyword id="KW-0551">Lipid droplet</keyword>
<keyword id="KW-0472">Membrane</keyword>
<keyword id="KW-0677">Repeat</keyword>
<keyword id="KW-0812">Transmembrane</keyword>
<keyword id="KW-1133">Transmembrane helix</keyword>
<reference key="1">
    <citation type="journal article" date="1991" name="Plant Mol. Biol.">
        <title>A Brassica napus mRNA expressed specifically in developing microspores.</title>
        <authorList>
            <person name="Roberts M.R."/>
            <person name="Robson F."/>
            <person name="Foster G.D."/>
            <person name="Draper J."/>
            <person name="Scott R.J."/>
        </authorList>
    </citation>
    <scope>NUCLEOTIDE SEQUENCE [MRNA]</scope>
    <scope>TISSUE SPECIFICITY</scope>
    <scope>DEVELOPMENTAL STAGE</scope>
    <source>
        <tissue>Microspore</tissue>
    </source>
</reference>
<reference key="2">
    <citation type="journal article" date="1995" name="Planta">
        <title>Brassica napus pollen oleosins possess a characteristic C-terminal domain.</title>
        <authorList>
            <person name="Roberts M.R."/>
            <person name="Hodge R."/>
            <person name="Scott R."/>
        </authorList>
    </citation>
    <scope>NUCLEOTIDE SEQUENCE [MRNA]</scope>
    <source>
        <tissue>Anther</tissue>
    </source>
</reference>
<reference key="3">
    <citation type="journal article" date="1998" name="Plant J.">
        <title>Biosynthesis, targeting and processing of oleosin-like proteins, which are major pollen coat components in Brassica napus.</title>
        <authorList>
            <person name="Murphy D.J."/>
            <person name="Ross J.H.E."/>
        </authorList>
    </citation>
    <scope>PROTEIN SEQUENCE OF 2-12 AND 76-94</scope>
    <scope>FUNCTION</scope>
    <source>
        <strain>cv. Topas</strain>
        <tissue>Pollen</tissue>
    </source>
</reference>
<proteinExistence type="evidence at protein level"/>
<dbReference type="EMBL" id="X57332">
    <property type="protein sequence ID" value="CAA40608.1"/>
    <property type="status" value="ALT_FRAME"/>
    <property type="molecule type" value="mRNA"/>
</dbReference>
<dbReference type="EMBL" id="X82019">
    <property type="protein sequence ID" value="CAA57544.1"/>
    <property type="molecule type" value="mRNA"/>
</dbReference>
<dbReference type="EMBL" id="X82020">
    <property type="protein sequence ID" value="CAA57545.1"/>
    <property type="molecule type" value="mRNA"/>
</dbReference>
<dbReference type="PIR" id="S16569">
    <property type="entry name" value="S16569"/>
</dbReference>
<dbReference type="PIR" id="S49448">
    <property type="entry name" value="S49448"/>
</dbReference>
<dbReference type="PIR" id="S50195">
    <property type="entry name" value="S50195"/>
</dbReference>
<dbReference type="GO" id="GO:0016020">
    <property type="term" value="C:membrane"/>
    <property type="evidence" value="ECO:0007669"/>
    <property type="project" value="UniProtKB-SubCell"/>
</dbReference>
<dbReference type="GO" id="GO:0012511">
    <property type="term" value="C:monolayer-surrounded lipid storage body"/>
    <property type="evidence" value="ECO:0007669"/>
    <property type="project" value="InterPro"/>
</dbReference>
<dbReference type="GO" id="GO:0009791">
    <property type="term" value="P:post-embryonic development"/>
    <property type="evidence" value="ECO:0007669"/>
    <property type="project" value="UniProtKB-ARBA"/>
</dbReference>
<dbReference type="GO" id="GO:0048608">
    <property type="term" value="P:reproductive structure development"/>
    <property type="evidence" value="ECO:0007669"/>
    <property type="project" value="UniProtKB-ARBA"/>
</dbReference>
<dbReference type="InterPro" id="IPR000136">
    <property type="entry name" value="Oleosin"/>
</dbReference>
<dbReference type="PANTHER" id="PTHR33203">
    <property type="entry name" value="OLEOSIN"/>
    <property type="match status" value="1"/>
</dbReference>
<dbReference type="PANTHER" id="PTHR33203:SF42">
    <property type="entry name" value="OLEOSIN"/>
    <property type="match status" value="1"/>
</dbReference>
<dbReference type="Pfam" id="PF01277">
    <property type="entry name" value="Oleosin"/>
    <property type="match status" value="1"/>
</dbReference>
<protein>
    <recommendedName>
        <fullName>Oleosin-B1</fullName>
    </recommendedName>
    <alternativeName>
        <fullName>Microspore-specific protein I3</fullName>
    </alternativeName>
    <alternativeName>
        <fullName>Oleosin-B5</fullName>
    </alternativeName>
    <component>
        <recommendedName>
            <fullName>Pollen coat protein B1</fullName>
        </recommendedName>
        <alternativeName>
            <fullName>Pollen coat protein B5</fullName>
        </alternativeName>
    </component>
</protein>